<name>SPSB1_BOVIN</name>
<feature type="chain" id="PRO_0000238471" description="SPRY domain-containing SOCS box protein 1">
    <location>
        <begin position="1"/>
        <end position="273"/>
    </location>
</feature>
<feature type="domain" description="B30.2/SPRY" evidence="4">
    <location>
        <begin position="33"/>
        <end position="231"/>
    </location>
</feature>
<feature type="domain" description="SOCS box" evidence="3">
    <location>
        <begin position="232"/>
        <end position="273"/>
    </location>
</feature>
<feature type="modified residue" description="Phosphotyrosine" evidence="2">
    <location>
        <position position="31"/>
    </location>
</feature>
<organism>
    <name type="scientific">Bos taurus</name>
    <name type="common">Bovine</name>
    <dbReference type="NCBI Taxonomy" id="9913"/>
    <lineage>
        <taxon>Eukaryota</taxon>
        <taxon>Metazoa</taxon>
        <taxon>Chordata</taxon>
        <taxon>Craniata</taxon>
        <taxon>Vertebrata</taxon>
        <taxon>Euteleostomi</taxon>
        <taxon>Mammalia</taxon>
        <taxon>Eutheria</taxon>
        <taxon>Laurasiatheria</taxon>
        <taxon>Artiodactyla</taxon>
        <taxon>Ruminantia</taxon>
        <taxon>Pecora</taxon>
        <taxon>Bovidae</taxon>
        <taxon>Bovinae</taxon>
        <taxon>Bos</taxon>
    </lineage>
</organism>
<protein>
    <recommendedName>
        <fullName>SPRY domain-containing SOCS box protein 1</fullName>
        <shortName>SSB-1</shortName>
    </recommendedName>
</protein>
<keyword id="KW-0963">Cytoplasm</keyword>
<keyword id="KW-0597">Phosphoprotein</keyword>
<keyword id="KW-1185">Reference proteome</keyword>
<keyword id="KW-0833">Ubl conjugation pathway</keyword>
<proteinExistence type="evidence at transcript level"/>
<comment type="function">
    <text evidence="2">Substrate recognition component of a SCF-like ECS (Elongin BC-CUL2/5-SOCS-box protein) E3 ubiquitin-protein ligase complex which mediates the ubiquitination and subsequent proteasomal degradation of target proteins (By similarity). Negatively regulates nitric oxide (NO) production and limits cellular toxicity in activated macrophages by mediating the ubiquitination and proteasomal degradation of NOS2 (By similarity). Acts as a bridge which links NOS2 with the ECS E3 ubiquitin ligase complex components ELOC and CUL5 (By similarity).</text>
</comment>
<comment type="pathway">
    <text>Protein modification; protein ubiquitination.</text>
</comment>
<comment type="subunit">
    <text evidence="2">Component of the probable ECS(SPSB1) E3 ubiquitin-protein ligase complex which contains CUL5, RNF7/RBX2, Elongin BC complex and SPSB1 (By similarity). Interacts with CUL5, RNF7, ELOB and ELOC (By similarity). Directly interacts with MET tyrosine kinase domain in the presence and in the absence of HGF, however HGF treatment has a positive effect on this interaction (By similarity). When phosphorylated, interacts with RASA1 without affecting its stability (By similarity). Interacts (via B30.2/SPRY domain) with PAWR; this interaction is direct and occurs in association with the Elongin BC complex (By similarity). Interacts with NOS2 and EPHB2 (By similarity).</text>
</comment>
<comment type="subcellular location">
    <subcellularLocation>
        <location evidence="5">Cytoplasm</location>
    </subcellularLocation>
    <subcellularLocation>
        <location evidence="2">Cytoplasm</location>
        <location evidence="2">Cytosol</location>
    </subcellularLocation>
    <text evidence="2">Exhibits a diffuse cytosolic localization.</text>
</comment>
<comment type="domain">
    <text evidence="1 2">The SOCS box domain mediates the interaction with the Elongin BC complex, an adapter module in different E3 ubiquitin ligase complexes (By similarity). Essential for its ability to link NOS2 and the ECS E3 ubiquitin ligase complex components ELOC and CUL5 (By similarity).</text>
</comment>
<comment type="domain">
    <text evidence="2">The B30.2/SPRY domain is involved in MET and PAWR binding.</text>
</comment>
<comment type="similarity">
    <text evidence="5">Belongs to the SPSB family.</text>
</comment>
<accession>Q5E9X6</accession>
<gene>
    <name type="primary">SPSB1</name>
    <name type="synonym">SSB1</name>
</gene>
<reference key="1">
    <citation type="journal article" date="2005" name="BMC Genomics">
        <title>Characterization of 954 bovine full-CDS cDNA sequences.</title>
        <authorList>
            <person name="Harhay G.P."/>
            <person name="Sonstegard T.S."/>
            <person name="Keele J.W."/>
            <person name="Heaton M.P."/>
            <person name="Clawson M.L."/>
            <person name="Snelling W.M."/>
            <person name="Wiedmann R.T."/>
            <person name="Van Tassell C.P."/>
            <person name="Smith T.P.L."/>
        </authorList>
    </citation>
    <scope>NUCLEOTIDE SEQUENCE [LARGE SCALE MRNA]</scope>
</reference>
<sequence>MGQKVTGGIKTVDMRDPTYRPLKQELQGLDYCKPTRLDLLLDMPPVSYDVQLLHSWNNNDRSLNVFVKEDDKLIFHRHPVAQSTDAIRGKVGYTRGLHVWQITWAMRQRGTHAVVGVATADAPLHSVGYTTLVGNNHESWGWDLGRNRLYHDGKNQPSKTYPAFLEPDETFIVPDSFLVALDMDDGTLSFIVDGQYMGVAFRGLKGKKLYPVVSAVWGHCEIRMRYLNGLDPEPLPLMDLCRRSVRLALGKGRLGEIHALPLPASLKAYLLYQ</sequence>
<dbReference type="EMBL" id="BT020794">
    <property type="protein sequence ID" value="AAX08811.1"/>
    <property type="molecule type" value="mRNA"/>
</dbReference>
<dbReference type="RefSeq" id="NP_001029381.1">
    <property type="nucleotide sequence ID" value="NM_001034209.1"/>
</dbReference>
<dbReference type="SMR" id="Q5E9X6"/>
<dbReference type="FunCoup" id="Q5E9X6">
    <property type="interactions" value="859"/>
</dbReference>
<dbReference type="STRING" id="9913.ENSBTAP00000068833"/>
<dbReference type="PaxDb" id="9913-ENSBTAP00000034027"/>
<dbReference type="GeneID" id="504407"/>
<dbReference type="KEGG" id="bta:504407"/>
<dbReference type="CTD" id="80176"/>
<dbReference type="eggNOG" id="KOG3953">
    <property type="taxonomic scope" value="Eukaryota"/>
</dbReference>
<dbReference type="InParanoid" id="Q5E9X6"/>
<dbReference type="OrthoDB" id="60984at2759"/>
<dbReference type="UniPathway" id="UPA00143"/>
<dbReference type="Proteomes" id="UP000009136">
    <property type="component" value="Unplaced"/>
</dbReference>
<dbReference type="GO" id="GO:0005829">
    <property type="term" value="C:cytosol"/>
    <property type="evidence" value="ECO:0000250"/>
    <property type="project" value="UniProtKB"/>
</dbReference>
<dbReference type="GO" id="GO:0019005">
    <property type="term" value="C:SCF ubiquitin ligase complex"/>
    <property type="evidence" value="ECO:0000318"/>
    <property type="project" value="GO_Central"/>
</dbReference>
<dbReference type="GO" id="GO:1990756">
    <property type="term" value="F:ubiquitin-like ligase-substrate adaptor activity"/>
    <property type="evidence" value="ECO:0000250"/>
    <property type="project" value="UniProtKB"/>
</dbReference>
<dbReference type="GO" id="GO:0043161">
    <property type="term" value="P:proteasome-mediated ubiquitin-dependent protein catabolic process"/>
    <property type="evidence" value="ECO:0000318"/>
    <property type="project" value="GO_Central"/>
</dbReference>
<dbReference type="GO" id="GO:0016567">
    <property type="term" value="P:protein ubiquitination"/>
    <property type="evidence" value="ECO:0000250"/>
    <property type="project" value="UniProtKB"/>
</dbReference>
<dbReference type="GO" id="GO:0006511">
    <property type="term" value="P:ubiquitin-dependent protein catabolic process"/>
    <property type="evidence" value="ECO:0000250"/>
    <property type="project" value="UniProtKB"/>
</dbReference>
<dbReference type="CDD" id="cd12906">
    <property type="entry name" value="SPRY_SOCS1-2-4"/>
    <property type="match status" value="1"/>
</dbReference>
<dbReference type="FunFam" id="1.10.750.20:FF:000001">
    <property type="entry name" value="Ankyrin repeat and SOCS box containing 1"/>
    <property type="match status" value="1"/>
</dbReference>
<dbReference type="FunFam" id="2.60.120.920:FF:000007">
    <property type="entry name" value="SPRY domain-containing SOCS box protein 1"/>
    <property type="match status" value="1"/>
</dbReference>
<dbReference type="Gene3D" id="2.60.120.920">
    <property type="match status" value="1"/>
</dbReference>
<dbReference type="Gene3D" id="1.10.750.20">
    <property type="entry name" value="SOCS box"/>
    <property type="match status" value="1"/>
</dbReference>
<dbReference type="InterPro" id="IPR001870">
    <property type="entry name" value="B30.2/SPRY"/>
</dbReference>
<dbReference type="InterPro" id="IPR043136">
    <property type="entry name" value="B30.2/SPRY_sf"/>
</dbReference>
<dbReference type="InterPro" id="IPR013320">
    <property type="entry name" value="ConA-like_dom_sf"/>
</dbReference>
<dbReference type="InterPro" id="IPR050672">
    <property type="entry name" value="FBXO45-Fsn/SPSB_families"/>
</dbReference>
<dbReference type="InterPro" id="IPR001496">
    <property type="entry name" value="SOCS_box"/>
</dbReference>
<dbReference type="InterPro" id="IPR003877">
    <property type="entry name" value="SPRY_dom"/>
</dbReference>
<dbReference type="PANTHER" id="PTHR12245">
    <property type="entry name" value="SPRY DOMAIN CONTAINING SOCS BOX PROTEIN"/>
    <property type="match status" value="1"/>
</dbReference>
<dbReference type="PANTHER" id="PTHR12245:SF8">
    <property type="entry name" value="SPRY DOMAIN-CONTAINING SOCS BOX PROTEIN 1"/>
    <property type="match status" value="1"/>
</dbReference>
<dbReference type="Pfam" id="PF07525">
    <property type="entry name" value="SOCS_box"/>
    <property type="match status" value="1"/>
</dbReference>
<dbReference type="Pfam" id="PF00622">
    <property type="entry name" value="SPRY"/>
    <property type="match status" value="1"/>
</dbReference>
<dbReference type="SMART" id="SM00969">
    <property type="entry name" value="SOCS_box"/>
    <property type="match status" value="1"/>
</dbReference>
<dbReference type="SMART" id="SM00449">
    <property type="entry name" value="SPRY"/>
    <property type="match status" value="1"/>
</dbReference>
<dbReference type="SUPFAM" id="SSF49899">
    <property type="entry name" value="Concanavalin A-like lectins/glucanases"/>
    <property type="match status" value="1"/>
</dbReference>
<dbReference type="PROSITE" id="PS50188">
    <property type="entry name" value="B302_SPRY"/>
    <property type="match status" value="1"/>
</dbReference>
<dbReference type="PROSITE" id="PS50225">
    <property type="entry name" value="SOCS"/>
    <property type="match status" value="1"/>
</dbReference>
<evidence type="ECO:0000250" key="1"/>
<evidence type="ECO:0000250" key="2">
    <source>
        <dbReference type="UniProtKB" id="Q96BD6"/>
    </source>
</evidence>
<evidence type="ECO:0000255" key="3">
    <source>
        <dbReference type="PROSITE-ProRule" id="PRU00194"/>
    </source>
</evidence>
<evidence type="ECO:0000255" key="4">
    <source>
        <dbReference type="PROSITE-ProRule" id="PRU00548"/>
    </source>
</evidence>
<evidence type="ECO:0000305" key="5"/>